<name>CEEP_RUMAL</name>
<feature type="chain" id="PRO_0000421448" description="Cellobiose 2-epimerase">
    <location>
        <begin position="1"/>
        <end position="389"/>
    </location>
</feature>
<feature type="mutagenesis site" description="Lack of activity." evidence="4">
    <original>R</original>
    <variation>A</variation>
    <variation>K</variation>
    <variation>H</variation>
    <location>
        <position position="52"/>
    </location>
</feature>
<feature type="mutagenesis site" description="Strong decrease in activity." evidence="4">
    <original>F</original>
    <variation>A</variation>
    <location>
        <position position="114"/>
    </location>
</feature>
<feature type="mutagenesis site" description="Lack of activity." evidence="4">
    <original>H</original>
    <variation>A</variation>
    <variation>K</variation>
    <variation>R</variation>
    <location>
        <position position="243"/>
    </location>
</feature>
<feature type="mutagenesis site" description="Lack of activity." evidence="4">
    <original>E</original>
    <variation>A</variation>
    <variation>Q</variation>
    <location>
        <position position="246"/>
    </location>
</feature>
<feature type="mutagenesis site" description="Lack of activity." evidence="4">
    <original>W</original>
    <variation>F</variation>
    <location>
        <position position="249"/>
    </location>
</feature>
<feature type="mutagenesis site" description="Strong decrease in activity." evidence="4">
    <original>W</original>
    <variation>F</variation>
    <location>
        <position position="303"/>
    </location>
</feature>
<feature type="mutagenesis site" description="Lack of activity." evidence="4">
    <original>W</original>
    <variation>F</variation>
    <location>
        <position position="304"/>
    </location>
</feature>
<feature type="mutagenesis site" description="Lack of activity." evidence="4">
    <original>E</original>
    <variation>A</variation>
    <variation>D</variation>
    <variation>Q</variation>
    <location>
        <position position="308"/>
    </location>
</feature>
<feature type="mutagenesis site" description="Lack of activity." evidence="4">
    <original>H</original>
    <variation>A</variation>
    <variation>K</variation>
    <variation>R</variation>
    <location>
        <position position="374"/>
    </location>
</feature>
<feature type="sequence conflict" description="In Ref. 2; AA sequence." evidence="5" ref="2">
    <original>ISEIRQ</original>
    <variation>KEEVKN</variation>
    <location>
        <begin position="3"/>
        <end position="8"/>
    </location>
</feature>
<feature type="sequence conflict" description="In Ref. 1; AA sequence." evidence="5" ref="1">
    <original>Q</original>
    <variation>N</variation>
    <location>
        <position position="8"/>
    </location>
</feature>
<feature type="sequence conflict" description="In Ref. 1; AA sequence." evidence="5" ref="1">
    <original>D</original>
    <variation>E</variation>
    <location>
        <position position="12"/>
    </location>
</feature>
<feature type="sequence conflict" description="In Ref. 2; AA sequence." evidence="5" ref="2">
    <original>D</original>
    <variation>S</variation>
    <location>
        <position position="12"/>
    </location>
</feature>
<feature type="helix" evidence="7">
    <location>
        <begin position="2"/>
        <end position="12"/>
    </location>
</feature>
<feature type="helix" evidence="7">
    <location>
        <begin position="14"/>
        <end position="19"/>
    </location>
</feature>
<feature type="turn" evidence="7">
    <location>
        <begin position="24"/>
        <end position="26"/>
    </location>
</feature>
<feature type="strand" evidence="7">
    <location>
        <begin position="27"/>
        <end position="29"/>
    </location>
</feature>
<feature type="helix" evidence="7">
    <location>
        <begin position="47"/>
        <end position="64"/>
    </location>
</feature>
<feature type="helix" evidence="7">
    <location>
        <begin position="67"/>
        <end position="83"/>
    </location>
</feature>
<feature type="turn" evidence="7">
    <location>
        <begin position="87"/>
        <end position="89"/>
    </location>
</feature>
<feature type="strand" evidence="7">
    <location>
        <begin position="94"/>
        <end position="96"/>
    </location>
</feature>
<feature type="strand" evidence="7">
    <location>
        <begin position="102"/>
        <end position="104"/>
    </location>
</feature>
<feature type="helix" evidence="7">
    <location>
        <begin position="109"/>
        <end position="126"/>
    </location>
</feature>
<feature type="helix" evidence="7">
    <location>
        <begin position="129"/>
        <end position="145"/>
    </location>
</feature>
<feature type="turn" evidence="7">
    <location>
        <begin position="166"/>
        <end position="168"/>
    </location>
</feature>
<feature type="strand" evidence="7">
    <location>
        <begin position="170"/>
        <end position="172"/>
    </location>
</feature>
<feature type="strand" evidence="7">
    <location>
        <begin position="176"/>
        <end position="178"/>
    </location>
</feature>
<feature type="helix" evidence="7">
    <location>
        <begin position="179"/>
        <end position="196"/>
    </location>
</feature>
<feature type="helix" evidence="7">
    <location>
        <begin position="199"/>
        <end position="214"/>
    </location>
</feature>
<feature type="turn" evidence="7">
    <location>
        <begin position="219"/>
        <end position="221"/>
    </location>
</feature>
<feature type="strand" evidence="7">
    <location>
        <begin position="238"/>
        <end position="240"/>
    </location>
</feature>
<feature type="helix" evidence="7">
    <location>
        <begin position="241"/>
        <end position="258"/>
    </location>
</feature>
<feature type="helix" evidence="7">
    <location>
        <begin position="261"/>
        <end position="281"/>
    </location>
</feature>
<feature type="strand" evidence="7">
    <location>
        <begin position="291"/>
        <end position="293"/>
    </location>
</feature>
<feature type="strand" evidence="7">
    <location>
        <begin position="296"/>
        <end position="298"/>
    </location>
</feature>
<feature type="helix" evidence="7">
    <location>
        <begin position="303"/>
        <end position="318"/>
    </location>
</feature>
<feature type="helix" evidence="7">
    <location>
        <begin position="323"/>
        <end position="339"/>
    </location>
</feature>
<feature type="strand" evidence="7">
    <location>
        <begin position="351"/>
        <end position="353"/>
    </location>
</feature>
<feature type="strand" evidence="7">
    <location>
        <begin position="365"/>
        <end position="367"/>
    </location>
</feature>
<feature type="helix" evidence="7">
    <location>
        <begin position="373"/>
        <end position="385"/>
    </location>
</feature>
<dbReference type="EC" id="5.1.3.11" evidence="1"/>
<dbReference type="EMBL" id="AB301953">
    <property type="protein sequence ID" value="BAF81108.1"/>
    <property type="molecule type" value="Genomic_DNA"/>
</dbReference>
<dbReference type="PDB" id="3VW5">
    <property type="method" value="X-ray"/>
    <property type="resolution" value="2.60 A"/>
    <property type="chains" value="A/B/C=1-389"/>
</dbReference>
<dbReference type="PDBsum" id="3VW5"/>
<dbReference type="SMR" id="P0DKY4"/>
<dbReference type="MINT" id="P0DKY4"/>
<dbReference type="KEGG" id="ag:BAF81108"/>
<dbReference type="BioCyc" id="MetaCyc:MONOMER-18526"/>
<dbReference type="BRENDA" id="5.1.3.11">
    <property type="organism ID" value="5477"/>
</dbReference>
<dbReference type="EvolutionaryTrace" id="P0DKY4"/>
<dbReference type="GO" id="GO:0005737">
    <property type="term" value="C:cytoplasm"/>
    <property type="evidence" value="ECO:0007669"/>
    <property type="project" value="UniProtKB-SubCell"/>
</dbReference>
<dbReference type="GO" id="GO:0047736">
    <property type="term" value="F:cellobiose epimerase activity"/>
    <property type="evidence" value="ECO:0007669"/>
    <property type="project" value="UniProtKB-UniRule"/>
</dbReference>
<dbReference type="GO" id="GO:0005975">
    <property type="term" value="P:carbohydrate metabolic process"/>
    <property type="evidence" value="ECO:0007669"/>
    <property type="project" value="InterPro"/>
</dbReference>
<dbReference type="Gene3D" id="1.50.10.10">
    <property type="match status" value="1"/>
</dbReference>
<dbReference type="HAMAP" id="MF_00929">
    <property type="entry name" value="Cellobiose_2_epim"/>
    <property type="match status" value="1"/>
</dbReference>
<dbReference type="InterPro" id="IPR008928">
    <property type="entry name" value="6-hairpin_glycosidase_sf"/>
</dbReference>
<dbReference type="InterPro" id="IPR012341">
    <property type="entry name" value="6hp_glycosidase-like_sf"/>
</dbReference>
<dbReference type="InterPro" id="IPR010819">
    <property type="entry name" value="AGE/CE"/>
</dbReference>
<dbReference type="InterPro" id="IPR028584">
    <property type="entry name" value="Cellobiose_2_epim"/>
</dbReference>
<dbReference type="PANTHER" id="PTHR15108">
    <property type="entry name" value="N-ACYLGLUCOSAMINE-2-EPIMERASE"/>
    <property type="match status" value="1"/>
</dbReference>
<dbReference type="Pfam" id="PF07221">
    <property type="entry name" value="GlcNAc_2-epim"/>
    <property type="match status" value="1"/>
</dbReference>
<dbReference type="SUPFAM" id="SSF48208">
    <property type="entry name" value="Six-hairpin glycosidases"/>
    <property type="match status" value="1"/>
</dbReference>
<reference key="1">
    <citation type="journal article" date="2007" name="Biochem. Biophys. Res. Commun.">
        <title>Cloning and sequencing of the cellobiose 2-epimerase gene from an obligatory anaerobe, Ruminococcus albus.</title>
        <authorList>
            <person name="Ito S."/>
            <person name="Hamada S."/>
            <person name="Yamaguchi K."/>
            <person name="Umene S."/>
            <person name="Ito H."/>
            <person name="Matsui H."/>
            <person name="Ozawa T."/>
            <person name="Taguchi H."/>
            <person name="Watanabe J."/>
            <person name="Wasaki J."/>
            <person name="Ito S."/>
        </authorList>
    </citation>
    <scope>NUCLEOTIDE SEQUENCE [GENOMIC DNA]</scope>
    <scope>PROTEIN SEQUENCE OF 1-17</scope>
    <scope>FUNCTION</scope>
    <scope>CATALYTIC ACTIVITY</scope>
    <scope>SUBCELLULAR LOCATION</scope>
    <source>
        <strain>NE1</strain>
    </source>
</reference>
<reference key="2">
    <citation type="journal article" date="2008" name="Appl. Microbiol. Biotechnol.">
        <title>Enzymatic properties of cellobiose 2-epimerase from Ruminococcus albus and the synthesis of rare oligosaccharides by the enzyme.</title>
        <authorList>
            <person name="Ito S."/>
            <person name="Taguchi H."/>
            <person name="Hamada S."/>
            <person name="Kawauchi S."/>
            <person name="Ito H."/>
            <person name="Senoura T."/>
            <person name="Watanabe J."/>
            <person name="Nishimukai M."/>
            <person name="Ito S."/>
            <person name="Matsui H."/>
        </authorList>
    </citation>
    <scope>NUCLEOTIDE SEQUENCE [GENOMIC DNA]</scope>
    <scope>PROTEIN SEQUENCE OF 1-17</scope>
    <scope>FUNCTION</scope>
    <scope>CATALYTIC ACTIVITY</scope>
    <scope>ACTIVITY REGULATION</scope>
    <scope>BIOPHYSICOCHEMICAL PROPERTIES</scope>
    <source>
        <strain>NE1</strain>
    </source>
</reference>
<reference key="3">
    <citation type="journal article" date="2009" name="Biotechnol. Lett.">
        <title>Site-directed mutagenesis of possible catalytic residues of cellobiose 2-epimerase from Ruminococcus albus.</title>
        <authorList>
            <person name="Ito S."/>
            <person name="Hamada S."/>
            <person name="Ito H."/>
            <person name="Matsui H."/>
            <person name="Ozawa T."/>
            <person name="Taguchi H."/>
            <person name="Ito S."/>
        </authorList>
    </citation>
    <scope>MUTAGENESIS OF ARG-52; PHE-114; HIS-243; GLU-246; TRP-249; TRP-303; TRP-304; GLU-308 AND HIS-374</scope>
    <source>
        <strain>NE1</strain>
    </source>
</reference>
<organism>
    <name type="scientific">Ruminococcus albus</name>
    <dbReference type="NCBI Taxonomy" id="1264"/>
    <lineage>
        <taxon>Bacteria</taxon>
        <taxon>Bacillati</taxon>
        <taxon>Bacillota</taxon>
        <taxon>Clostridia</taxon>
        <taxon>Eubacteriales</taxon>
        <taxon>Oscillospiraceae</taxon>
        <taxon>Ruminococcus</taxon>
    </lineage>
</organism>
<keyword id="KW-0002">3D-structure</keyword>
<keyword id="KW-0963">Cytoplasm</keyword>
<keyword id="KW-0903">Direct protein sequencing</keyword>
<keyword id="KW-0413">Isomerase</keyword>
<protein>
    <recommendedName>
        <fullName evidence="1">Cellobiose 2-epimerase</fullName>
        <shortName evidence="1">CE</shortName>
        <ecNumber evidence="1">5.1.3.11</ecNumber>
    </recommendedName>
</protein>
<sequence length="389" mass="45220">MMISEIRQELTDHIIPFWNKLRDDENGGFYGYLSYGLGLDKKADKGVILHSRILWFYSNAYMTLGGDELLDNAKHAYEFIKNNCIDYEYGGVYWMMDFEGKPADTMKHTYNIAFAIYALSSYYRASGDKEALALAYRPFEDIEKNTLYEYGYREAFDRQWRLVDNEALSENGLKADKTMNAILHLIEAYTELYKADGNEKVADRLKFQLGQMRDIVYTPDTNALKVFFDTAFNLVGDIHSYGHDIEATWLMDRACDVLGDEDLKKQFAEMDLKISHNIQDIALEDGALNNERDKNEIDKTRVWWVQAEAVVGFINAYQHSGDEKFLESAKSVWENIKEYIIDKREGGEWYSEVTFDHTPHDYKETVGPWKCPYHNGRMCMEVITRGVDI</sequence>
<comment type="function">
    <text evidence="1 2 3">Catalyzes the reversible epimerization of cellobiose to 4-O-beta-D-glucopyranosyl-D-mannose (Glc-Man). Can also epimerize cellotriose to Glc-Glc-Man, cellotetraose to Glc-Glc-Glc-Man, and lactose to epilactose.</text>
</comment>
<comment type="catalytic activity">
    <reaction evidence="1 2 3">
        <text>D-cellobiose = beta-D-glucosyl-(1-&gt;4)-D-mannopyranose</text>
        <dbReference type="Rhea" id="RHEA:23384"/>
        <dbReference type="ChEBI" id="CHEBI:17057"/>
        <dbReference type="ChEBI" id="CHEBI:47931"/>
        <dbReference type="EC" id="5.1.3.11"/>
    </reaction>
</comment>
<comment type="activity regulation">
    <text evidence="3">Enhanced by Mg(2+) and Ca(2+) ions, ethylenediaminetetraacetic acid, ethylene glycol tetraacetic acid and citrate. Inhibited by Al(3+), Fe(3+), Co(2+), Cu(2+), Zn(2+), Pb(2+) and Ag(+) ions, iodoacetate, 4-chloromercuribenzoate and N-bromosuccinimide.</text>
</comment>
<comment type="biophysicochemical properties">
    <kinetics>
        <KM evidence="3">13.8 mM for cellobiose</KM>
        <KM evidence="3">33 mM for lactose</KM>
        <Vmax evidence="3">88.8 umol/min/mg enzyme with cellobiose as substrate</Vmax>
        <Vmax evidence="3">72.5 umol/min/mg enzyme with lactose as substrate</Vmax>
        <text>kcat is 63.8 sec(-1) for cellobiose. kcat is 52.1 sec(-1) for lactose.</text>
    </kinetics>
    <phDependence>
        <text evidence="3">Optimum pH is 7.5.</text>
    </phDependence>
    <temperatureDependence>
        <text evidence="3">Optimum temperature is 30 degrees Celsius.</text>
    </temperatureDependence>
</comment>
<comment type="subcellular location">
    <subcellularLocation>
        <location evidence="6">Cytoplasm</location>
    </subcellularLocation>
</comment>
<comment type="similarity">
    <text evidence="1">Belongs to the cellobiose 2-epimerase family.</text>
</comment>
<evidence type="ECO:0000255" key="1">
    <source>
        <dbReference type="HAMAP-Rule" id="MF_00929"/>
    </source>
</evidence>
<evidence type="ECO:0000269" key="2">
    <source>
    </source>
</evidence>
<evidence type="ECO:0000269" key="3">
    <source>
    </source>
</evidence>
<evidence type="ECO:0000269" key="4">
    <source>
    </source>
</evidence>
<evidence type="ECO:0000305" key="5"/>
<evidence type="ECO:0000305" key="6">
    <source>
    </source>
</evidence>
<evidence type="ECO:0007829" key="7">
    <source>
        <dbReference type="PDB" id="3VW5"/>
    </source>
</evidence>
<accession>P0DKY4</accession>
<accession>A8CF79</accession>
<gene>
    <name type="primary">ce-ne1</name>
</gene>
<proteinExistence type="evidence at protein level"/>